<accession>Q63634</accession>
<accession>P70586</accession>
<dbReference type="EMBL" id="U66274">
    <property type="protein sequence ID" value="AAC52845.1"/>
    <property type="molecule type" value="mRNA"/>
</dbReference>
<dbReference type="EMBL" id="U56078">
    <property type="protein sequence ID" value="AAC52677.1"/>
    <property type="status" value="ALT_INIT"/>
    <property type="molecule type" value="mRNA"/>
</dbReference>
<dbReference type="EMBL" id="AF044264">
    <property type="protein sequence ID" value="AAC15670.1"/>
    <property type="molecule type" value="mRNA"/>
</dbReference>
<dbReference type="RefSeq" id="NP_037001.1">
    <property type="nucleotide sequence ID" value="NM_012869.2"/>
</dbReference>
<dbReference type="RefSeq" id="XP_006253075.1">
    <property type="nucleotide sequence ID" value="XM_006253013.3"/>
</dbReference>
<dbReference type="RefSeq" id="XP_006253076.1">
    <property type="nucleotide sequence ID" value="XM_006253014.5"/>
</dbReference>
<dbReference type="RefSeq" id="XP_017455484.1">
    <property type="nucleotide sequence ID" value="XM_017599995.1"/>
</dbReference>
<dbReference type="RefSeq" id="XP_017455485.1">
    <property type="nucleotide sequence ID" value="XM_017599996.1"/>
</dbReference>
<dbReference type="RefSeq" id="XP_017455486.1">
    <property type="nucleotide sequence ID" value="XM_017599997.1"/>
</dbReference>
<dbReference type="RefSeq" id="XP_017455487.1">
    <property type="nucleotide sequence ID" value="XM_017599998.1"/>
</dbReference>
<dbReference type="SMR" id="Q63634"/>
<dbReference type="FunCoup" id="Q63634">
    <property type="interactions" value="131"/>
</dbReference>
<dbReference type="IntAct" id="Q63634">
    <property type="interactions" value="1"/>
</dbReference>
<dbReference type="STRING" id="10116.ENSRNOP00000018976"/>
<dbReference type="BindingDB" id="Q63634"/>
<dbReference type="ChEMBL" id="CHEMBL2548"/>
<dbReference type="GuidetoPHARMACOLOGY" id="308"/>
<dbReference type="GlyCosmos" id="Q63634">
    <property type="glycosylation" value="2 sites, No reported glycans"/>
</dbReference>
<dbReference type="GlyGen" id="Q63634">
    <property type="glycosylation" value="2 sites"/>
</dbReference>
<dbReference type="PhosphoSitePlus" id="Q63634"/>
<dbReference type="PaxDb" id="10116-ENSRNOP00000018976"/>
<dbReference type="Ensembl" id="ENSRNOT00000018976.4">
    <property type="protein sequence ID" value="ENSRNOP00000018976.2"/>
    <property type="gene ID" value="ENSRNOG00000014172.5"/>
</dbReference>
<dbReference type="Ensembl" id="ENSRNOT00000099301.1">
    <property type="protein sequence ID" value="ENSRNOP00000089710.1"/>
    <property type="gene ID" value="ENSRNOG00000014172.5"/>
</dbReference>
<dbReference type="Ensembl" id="ENSRNOT00000109751.1">
    <property type="protein sequence ID" value="ENSRNOP00000086593.1"/>
    <property type="gene ID" value="ENSRNOG00000014172.5"/>
</dbReference>
<dbReference type="GeneID" id="25340"/>
<dbReference type="KEGG" id="rno:25340"/>
<dbReference type="UCSC" id="RGD:3199">
    <property type="organism name" value="rat"/>
</dbReference>
<dbReference type="AGR" id="RGD:3199"/>
<dbReference type="CTD" id="4889"/>
<dbReference type="RGD" id="3199">
    <property type="gene designation" value="Npy5r"/>
</dbReference>
<dbReference type="eggNOG" id="KOG3656">
    <property type="taxonomic scope" value="Eukaryota"/>
</dbReference>
<dbReference type="GeneTree" id="ENSGT00940000161766"/>
<dbReference type="HOGENOM" id="CLU_009579_6_1_1"/>
<dbReference type="InParanoid" id="Q63634"/>
<dbReference type="OMA" id="RHHQDTH"/>
<dbReference type="OrthoDB" id="5981855at2759"/>
<dbReference type="PhylomeDB" id="Q63634"/>
<dbReference type="TreeFam" id="TF315303"/>
<dbReference type="Reactome" id="R-RNO-375276">
    <property type="pathway name" value="Peptide ligand-binding receptors"/>
</dbReference>
<dbReference type="Reactome" id="R-RNO-418594">
    <property type="pathway name" value="G alpha (i) signalling events"/>
</dbReference>
<dbReference type="PRO" id="PR:Q63634"/>
<dbReference type="Proteomes" id="UP000002494">
    <property type="component" value="Chromosome 16"/>
</dbReference>
<dbReference type="Bgee" id="ENSRNOG00000014172">
    <property type="expression patterns" value="Expressed in frontal cortex and 2 other cell types or tissues"/>
</dbReference>
<dbReference type="GO" id="GO:0098982">
    <property type="term" value="C:GABA-ergic synapse"/>
    <property type="evidence" value="ECO:0000266"/>
    <property type="project" value="RGD"/>
</dbReference>
<dbReference type="GO" id="GO:0016020">
    <property type="term" value="C:membrane"/>
    <property type="evidence" value="ECO:0000266"/>
    <property type="project" value="RGD"/>
</dbReference>
<dbReference type="GO" id="GO:0043005">
    <property type="term" value="C:neuron projection"/>
    <property type="evidence" value="ECO:0000266"/>
    <property type="project" value="RGD"/>
</dbReference>
<dbReference type="GO" id="GO:0005886">
    <property type="term" value="C:plasma membrane"/>
    <property type="evidence" value="ECO:0000318"/>
    <property type="project" value="GO_Central"/>
</dbReference>
<dbReference type="GO" id="GO:0098793">
    <property type="term" value="C:presynapse"/>
    <property type="evidence" value="ECO:0000266"/>
    <property type="project" value="RGD"/>
</dbReference>
<dbReference type="GO" id="GO:0042923">
    <property type="term" value="F:neuropeptide binding"/>
    <property type="evidence" value="ECO:0000318"/>
    <property type="project" value="GO_Central"/>
</dbReference>
<dbReference type="GO" id="GO:0004983">
    <property type="term" value="F:neuropeptide Y receptor activity"/>
    <property type="evidence" value="ECO:0000314"/>
    <property type="project" value="RGD"/>
</dbReference>
<dbReference type="GO" id="GO:0001602">
    <property type="term" value="F:pancreatic polypeptide receptor activity"/>
    <property type="evidence" value="ECO:0000314"/>
    <property type="project" value="RGD"/>
</dbReference>
<dbReference type="GO" id="GO:0001601">
    <property type="term" value="F:peptide YY receptor activity"/>
    <property type="evidence" value="ECO:0000314"/>
    <property type="project" value="RGD"/>
</dbReference>
<dbReference type="GO" id="GO:0003214">
    <property type="term" value="P:cardiac left ventricle morphogenesis"/>
    <property type="evidence" value="ECO:0000266"/>
    <property type="project" value="RGD"/>
</dbReference>
<dbReference type="GO" id="GO:0007268">
    <property type="term" value="P:chemical synaptic transmission"/>
    <property type="evidence" value="ECO:0000266"/>
    <property type="project" value="RGD"/>
</dbReference>
<dbReference type="GO" id="GO:0042755">
    <property type="term" value="P:eating behavior"/>
    <property type="evidence" value="ECO:0000315"/>
    <property type="project" value="RGD"/>
</dbReference>
<dbReference type="GO" id="GO:0007186">
    <property type="term" value="P:G protein-coupled receptor signaling pathway"/>
    <property type="evidence" value="ECO:0000318"/>
    <property type="project" value="GO_Central"/>
</dbReference>
<dbReference type="GO" id="GO:0060112">
    <property type="term" value="P:generation of ovulation cycle rhythm"/>
    <property type="evidence" value="ECO:0000315"/>
    <property type="project" value="RGD"/>
</dbReference>
<dbReference type="GO" id="GO:0002865">
    <property type="term" value="P:negative regulation of acute inflammatory response to antigenic stimulus"/>
    <property type="evidence" value="ECO:0000314"/>
    <property type="project" value="RGD"/>
</dbReference>
<dbReference type="GO" id="GO:0043066">
    <property type="term" value="P:negative regulation of apoptotic process"/>
    <property type="evidence" value="ECO:0000315"/>
    <property type="project" value="RGD"/>
</dbReference>
<dbReference type="GO" id="GO:0014050">
    <property type="term" value="P:negative regulation of glutamate secretion"/>
    <property type="evidence" value="ECO:0000315"/>
    <property type="project" value="RGD"/>
</dbReference>
<dbReference type="GO" id="GO:0032229">
    <property type="term" value="P:negative regulation of synaptic transmission, GABAergic"/>
    <property type="evidence" value="ECO:0000315"/>
    <property type="project" value="RGD"/>
</dbReference>
<dbReference type="GO" id="GO:0003151">
    <property type="term" value="P:outflow tract morphogenesis"/>
    <property type="evidence" value="ECO:0000266"/>
    <property type="project" value="RGD"/>
</dbReference>
<dbReference type="GO" id="GO:0002675">
    <property type="term" value="P:positive regulation of acute inflammatory response"/>
    <property type="evidence" value="ECO:0000315"/>
    <property type="project" value="RGD"/>
</dbReference>
<dbReference type="GO" id="GO:0008284">
    <property type="term" value="P:positive regulation of cell population proliferation"/>
    <property type="evidence" value="ECO:0000315"/>
    <property type="project" value="RGD"/>
</dbReference>
<dbReference type="GO" id="GO:0070374">
    <property type="term" value="P:positive regulation of ERK1 and ERK2 cascade"/>
    <property type="evidence" value="ECO:0000315"/>
    <property type="project" value="RGD"/>
</dbReference>
<dbReference type="GO" id="GO:0048661">
    <property type="term" value="P:positive regulation of smooth muscle cell proliferation"/>
    <property type="evidence" value="ECO:0000315"/>
    <property type="project" value="RGD"/>
</dbReference>
<dbReference type="GO" id="GO:0099538">
    <property type="term" value="P:synaptic signaling via neuropeptide"/>
    <property type="evidence" value="ECO:0000266"/>
    <property type="project" value="RGD"/>
</dbReference>
<dbReference type="CDD" id="cd15398">
    <property type="entry name" value="7tmA_NPY5R"/>
    <property type="match status" value="1"/>
</dbReference>
<dbReference type="Gene3D" id="1.20.1070.10">
    <property type="entry name" value="Rhodopsin 7-helix transmembrane proteins"/>
    <property type="match status" value="1"/>
</dbReference>
<dbReference type="InterPro" id="IPR000276">
    <property type="entry name" value="GPCR_Rhodpsn"/>
</dbReference>
<dbReference type="InterPro" id="IPR017452">
    <property type="entry name" value="GPCR_Rhodpsn_7TM"/>
</dbReference>
<dbReference type="InterPro" id="IPR000393">
    <property type="entry name" value="NPY5_rcpt"/>
</dbReference>
<dbReference type="InterPro" id="IPR000611">
    <property type="entry name" value="NPY_rcpt"/>
</dbReference>
<dbReference type="PANTHER" id="PTHR24235">
    <property type="entry name" value="NEUROPEPTIDE Y RECEPTOR"/>
    <property type="match status" value="1"/>
</dbReference>
<dbReference type="PANTHER" id="PTHR24235:SF10">
    <property type="entry name" value="NEUROPEPTIDE Y RECEPTOR TYPE 5"/>
    <property type="match status" value="1"/>
</dbReference>
<dbReference type="Pfam" id="PF00001">
    <property type="entry name" value="7tm_1"/>
    <property type="match status" value="1"/>
</dbReference>
<dbReference type="PRINTS" id="PR00237">
    <property type="entry name" value="GPCRRHODOPSN"/>
</dbReference>
<dbReference type="PRINTS" id="PR01016">
    <property type="entry name" value="NRPEPTIDEY5R"/>
</dbReference>
<dbReference type="PRINTS" id="PR01012">
    <property type="entry name" value="NRPEPTIDEYR"/>
</dbReference>
<dbReference type="SMART" id="SM01381">
    <property type="entry name" value="7TM_GPCR_Srsx"/>
    <property type="match status" value="1"/>
</dbReference>
<dbReference type="SUPFAM" id="SSF81321">
    <property type="entry name" value="Family A G protein-coupled receptor-like"/>
    <property type="match status" value="1"/>
</dbReference>
<dbReference type="PROSITE" id="PS50262">
    <property type="entry name" value="G_PROTEIN_RECEP_F1_2"/>
    <property type="match status" value="1"/>
</dbReference>
<keyword id="KW-1003">Cell membrane</keyword>
<keyword id="KW-1015">Disulfide bond</keyword>
<keyword id="KW-0297">G-protein coupled receptor</keyword>
<keyword id="KW-0325">Glycoprotein</keyword>
<keyword id="KW-0449">Lipoprotein</keyword>
<keyword id="KW-0472">Membrane</keyword>
<keyword id="KW-0564">Palmitate</keyword>
<keyword id="KW-0675">Receptor</keyword>
<keyword id="KW-1185">Reference proteome</keyword>
<keyword id="KW-0807">Transducer</keyword>
<keyword id="KW-0812">Transmembrane</keyword>
<keyword id="KW-1133">Transmembrane helix</keyword>
<evidence type="ECO:0000255" key="1"/>
<evidence type="ECO:0000255" key="2">
    <source>
        <dbReference type="PROSITE-ProRule" id="PRU00521"/>
    </source>
</evidence>
<evidence type="ECO:0000305" key="3"/>
<proteinExistence type="evidence at transcript level"/>
<reference key="1">
    <citation type="journal article" date="1996" name="J. Biol. Chem.">
        <title>Identification of a novel hypothalamic neuropeptide Y receptor associated with feeding behavior.</title>
        <authorList>
            <person name="Hu Y."/>
            <person name="Bloomquist B.T."/>
            <person name="Cornfield L.J."/>
            <person name="Decarr L.B."/>
            <person name="Flores-Riveros J.R."/>
            <person name="Friedman L."/>
            <person name="Jiang P."/>
            <person name="Lewis-Higgins L."/>
            <person name="Sadlowski Y."/>
            <person name="Schaefer J."/>
            <person name="Velazquez N."/>
            <person name="McCaleb M.L."/>
        </authorList>
    </citation>
    <scope>NUCLEOTIDE SEQUENCE [MRNA]</scope>
    <source>
        <strain>Sprague-Dawley</strain>
    </source>
</reference>
<reference key="2">
    <citation type="journal article" date="1996" name="Nature">
        <title>A receptor subtype involved in neuropeptide-Y-induced food intake.</title>
        <authorList>
            <person name="Gerald C."/>
            <person name="Walker M.W."/>
            <person name="Criscione L."/>
            <person name="Gustafson E.L."/>
            <person name="Batzl-Hartmann C."/>
            <person name="Smith K.E."/>
            <person name="Vaysse P."/>
            <person name="Durkin M.M."/>
            <person name="Laz T.M."/>
            <person name="Linemeyer D.L."/>
            <person name="Schaffhauser A.O."/>
            <person name="Whitebread S."/>
            <person name="Hofbauer K.G."/>
            <person name="Taber R.I."/>
            <person name="Branchek T.A."/>
            <person name="Weinshank R.L."/>
        </authorList>
    </citation>
    <scope>NUCLEOTIDE SEQUENCE [MRNA]</scope>
    <source>
        <tissue>Brain</tissue>
    </source>
</reference>
<reference key="3">
    <citation type="journal article" date="1998" name="Eur. J. Pharmacol.">
        <title>GR231118 (1229U91) and other analogues of the C-terminus of neuropeptide Y are potent neuropeptide Y Y1 receptor antagonists and neuropeptide Y Y4 receptor agonists.</title>
        <authorList>
            <person name="Parker E.M."/>
            <person name="Babij C.K."/>
            <person name="Balasubramaniam A."/>
            <person name="Burrier R.E."/>
            <person name="Guzzi M."/>
            <person name="Hamud F."/>
            <person name="Mukhopadhyay G."/>
            <person name="Rudinski M.S."/>
            <person name="Tao Z."/>
            <person name="Tice M."/>
            <person name="Xia L."/>
            <person name="Mullins D.E."/>
            <person name="Salisbury B.G."/>
        </authorList>
    </citation>
    <scope>NUCLEOTIDE SEQUENCE [MRNA]</scope>
    <source>
        <tissue>Brain</tissue>
    </source>
</reference>
<gene>
    <name type="primary">Npy5r</name>
    <name type="synonym">Npyr5</name>
</gene>
<name>NPY5R_RAT</name>
<comment type="function">
    <text>Receptor for neuropeptide Y and peptide YY. The activity of this receptor is mediated by G proteins that inhibit adenylate cyclase activity. Seems to be associated with food intake. Could be involved in feeding disorders.</text>
</comment>
<comment type="subcellular location">
    <subcellularLocation>
        <location>Cell membrane</location>
        <topology>Multi-pass membrane protein</topology>
    </subcellularLocation>
</comment>
<comment type="tissue specificity">
    <text>Brain; hypothalamus.</text>
</comment>
<comment type="similarity">
    <text evidence="2">Belongs to the G-protein coupled receptor 1 family.</text>
</comment>
<comment type="sequence caution" evidence="3">
    <conflict type="erroneous initiation">
        <sequence resource="EMBL-CDS" id="AAC52677"/>
    </conflict>
</comment>
<protein>
    <recommendedName>
        <fullName>Neuropeptide Y receptor type 5</fullName>
        <shortName>NPY5-R</shortName>
    </recommendedName>
    <alternativeName>
        <fullName>NPY-Y5 receptor</fullName>
        <shortName>NPYY5-R</shortName>
        <shortName>Y5 receptor</shortName>
    </alternativeName>
</protein>
<organism>
    <name type="scientific">Rattus norvegicus</name>
    <name type="common">Rat</name>
    <dbReference type="NCBI Taxonomy" id="10116"/>
    <lineage>
        <taxon>Eukaryota</taxon>
        <taxon>Metazoa</taxon>
        <taxon>Chordata</taxon>
        <taxon>Craniata</taxon>
        <taxon>Vertebrata</taxon>
        <taxon>Euteleostomi</taxon>
        <taxon>Mammalia</taxon>
        <taxon>Eutheria</taxon>
        <taxon>Euarchontoglires</taxon>
        <taxon>Glires</taxon>
        <taxon>Rodentia</taxon>
        <taxon>Myomorpha</taxon>
        <taxon>Muroidea</taxon>
        <taxon>Muridae</taxon>
        <taxon>Murinae</taxon>
        <taxon>Rattus</taxon>
    </lineage>
</organism>
<sequence>MEFKLEEHFNKTFVTENNTAAARNAAFPAWEDYRGSVDDLQYFLIGLYTFVSLLGFMGNLLILMAVMKKRNQKTTVNFLIGNLAFSDILVVLFCSPFTLTSVLLDQWMFGKAMCHIMPFLQCVSVLVSTLILISIAIVRYHMIKHPISNNLTANHGYFLIATVWTLGFAICSPLPVFHSLVELKETFGSALLSSKYLCVESWPSDSYRIAFTISLLLVQYILPLVCLTVSHTSVCRSISCGLSHKENRLEENEMINLTLQPSKKSRNQAKTPSTQKWSYSFIRKHRRRYSKKTACVLPAPAGPSQGKHLAVPENPASVRSQLSPSSKVIPGVPICFEVKPEESSDAHEMRVKRSITRIKKRSRSVFYRLTILILVFAVSWMPLHVFHVVTDFNDNLISNRHFKLVYCICHLLGMMSCCLNPILYGFLNNGIKADLRALIHCLHMS</sequence>
<feature type="chain" id="PRO_0000069942" description="Neuropeptide Y receptor type 5">
    <location>
        <begin position="1"/>
        <end position="445"/>
    </location>
</feature>
<feature type="topological domain" description="Extracellular" evidence="1">
    <location>
        <begin position="1"/>
        <end position="42"/>
    </location>
</feature>
<feature type="transmembrane region" description="Helical; Name=1" evidence="1">
    <location>
        <begin position="43"/>
        <end position="63"/>
    </location>
</feature>
<feature type="topological domain" description="Cytoplasmic" evidence="1">
    <location>
        <begin position="64"/>
        <end position="77"/>
    </location>
</feature>
<feature type="transmembrane region" description="Helical; Name=2" evidence="1">
    <location>
        <begin position="78"/>
        <end position="98"/>
    </location>
</feature>
<feature type="topological domain" description="Extracellular" evidence="1">
    <location>
        <begin position="99"/>
        <end position="117"/>
    </location>
</feature>
<feature type="transmembrane region" description="Helical; Name=3" evidence="1">
    <location>
        <begin position="118"/>
        <end position="138"/>
    </location>
</feature>
<feature type="topological domain" description="Cytoplasmic" evidence="1">
    <location>
        <begin position="139"/>
        <end position="156"/>
    </location>
</feature>
<feature type="transmembrane region" description="Helical; Name=4" evidence="1">
    <location>
        <begin position="157"/>
        <end position="177"/>
    </location>
</feature>
<feature type="topological domain" description="Extracellular" evidence="1">
    <location>
        <begin position="178"/>
        <end position="208"/>
    </location>
</feature>
<feature type="transmembrane region" description="Helical; Name=5" evidence="1">
    <location>
        <begin position="209"/>
        <end position="229"/>
    </location>
</feature>
<feature type="topological domain" description="Cytoplasmic" evidence="1">
    <location>
        <begin position="230"/>
        <end position="368"/>
    </location>
</feature>
<feature type="transmembrane region" description="Helical; Name=6" evidence="1">
    <location>
        <begin position="369"/>
        <end position="389"/>
    </location>
</feature>
<feature type="topological domain" description="Extracellular" evidence="1">
    <location>
        <begin position="390"/>
        <end position="406"/>
    </location>
</feature>
<feature type="transmembrane region" description="Helical; Name=7" evidence="1">
    <location>
        <begin position="407"/>
        <end position="427"/>
    </location>
</feature>
<feature type="topological domain" description="Cytoplasmic" evidence="1">
    <location>
        <begin position="428"/>
        <end position="445"/>
    </location>
</feature>
<feature type="lipid moiety-binding region" description="S-palmitoyl cysteine" evidence="1">
    <location>
        <position position="441"/>
    </location>
</feature>
<feature type="glycosylation site" description="N-linked (GlcNAc...) asparagine" evidence="1">
    <location>
        <position position="10"/>
    </location>
</feature>
<feature type="glycosylation site" description="N-linked (GlcNAc...) asparagine" evidence="1">
    <location>
        <position position="17"/>
    </location>
</feature>
<feature type="disulfide bond" evidence="2">
    <location>
        <begin position="114"/>
        <end position="198"/>
    </location>
</feature>